<sequence length="286" mass="31495">MQIPFTKMHGLGNNYVYIDLFDYAIDEKLYHDLAIQISDVYTGIGSDGMILIHPTTDADVGMRIFNKDGSEGKSCGNGLRCTAKYAYENGIVTNKKFHIQTKANIVEAEVSVDNNKVNQVTIDMGEPILARNEIPMMGNNDVKVVNEPFVVAGETQYITAVSMGNPHGVFFVDDIEKAPLETLGPTIEKDMRFPESINVEFIEVVSPTELNFRVWERGSGITQACGTGACAAVVAATLNEKVTKSHPIVVHLAGGDLNIEWKEDNHVWMTGPAEVIATGLFYYKEE</sequence>
<feature type="chain" id="PRO_0000149857" description="Diaminopimelate epimerase">
    <location>
        <begin position="1"/>
        <end position="286"/>
    </location>
</feature>
<feature type="active site" description="Proton donor" evidence="1">
    <location>
        <position position="75"/>
    </location>
</feature>
<feature type="active site" description="Proton acceptor" evidence="1">
    <location>
        <position position="225"/>
    </location>
</feature>
<feature type="binding site" evidence="1">
    <location>
        <position position="13"/>
    </location>
    <ligand>
        <name>substrate</name>
    </ligand>
</feature>
<feature type="binding site" evidence="1">
    <location>
        <position position="66"/>
    </location>
    <ligand>
        <name>substrate</name>
    </ligand>
</feature>
<feature type="binding site" evidence="1">
    <location>
        <begin position="76"/>
        <end position="77"/>
    </location>
    <ligand>
        <name>substrate</name>
    </ligand>
</feature>
<feature type="binding site" evidence="1">
    <location>
        <position position="165"/>
    </location>
    <ligand>
        <name>substrate</name>
    </ligand>
</feature>
<feature type="binding site" evidence="1">
    <location>
        <position position="198"/>
    </location>
    <ligand>
        <name>substrate</name>
    </ligand>
</feature>
<feature type="binding site" evidence="1">
    <location>
        <begin position="216"/>
        <end position="217"/>
    </location>
    <ligand>
        <name>substrate</name>
    </ligand>
</feature>
<feature type="binding site" evidence="1">
    <location>
        <begin position="226"/>
        <end position="227"/>
    </location>
    <ligand>
        <name>substrate</name>
    </ligand>
</feature>
<feature type="site" description="Could be important to modulate the pK values of the two catalytic cysteine residues" evidence="1">
    <location>
        <position position="167"/>
    </location>
</feature>
<feature type="site" description="Could be important to modulate the pK values of the two catalytic cysteine residues" evidence="1">
    <location>
        <position position="216"/>
    </location>
</feature>
<accession>Q8ENX2</accession>
<protein>
    <recommendedName>
        <fullName evidence="1">Diaminopimelate epimerase</fullName>
        <shortName evidence="1">DAP epimerase</shortName>
        <ecNumber evidence="1">5.1.1.7</ecNumber>
    </recommendedName>
    <alternativeName>
        <fullName evidence="1">PLP-independent amino acid racemase</fullName>
    </alternativeName>
</protein>
<evidence type="ECO:0000255" key="1">
    <source>
        <dbReference type="HAMAP-Rule" id="MF_00197"/>
    </source>
</evidence>
<name>DAPF_OCEIH</name>
<gene>
    <name evidence="1" type="primary">dapF</name>
    <name type="ordered locus">OB2354</name>
</gene>
<dbReference type="EC" id="5.1.1.7" evidence="1"/>
<dbReference type="EMBL" id="BA000028">
    <property type="protein sequence ID" value="BAC14310.1"/>
    <property type="molecule type" value="Genomic_DNA"/>
</dbReference>
<dbReference type="RefSeq" id="WP_011066745.1">
    <property type="nucleotide sequence ID" value="NC_004193.1"/>
</dbReference>
<dbReference type="SMR" id="Q8ENX2"/>
<dbReference type="STRING" id="221109.gene:10734605"/>
<dbReference type="KEGG" id="oih:OB2354"/>
<dbReference type="eggNOG" id="COG0253">
    <property type="taxonomic scope" value="Bacteria"/>
</dbReference>
<dbReference type="HOGENOM" id="CLU_053306_3_0_9"/>
<dbReference type="OrthoDB" id="9805408at2"/>
<dbReference type="PhylomeDB" id="Q8ENX2"/>
<dbReference type="UniPathway" id="UPA00034">
    <property type="reaction ID" value="UER00025"/>
</dbReference>
<dbReference type="Proteomes" id="UP000000822">
    <property type="component" value="Chromosome"/>
</dbReference>
<dbReference type="GO" id="GO:0005829">
    <property type="term" value="C:cytosol"/>
    <property type="evidence" value="ECO:0007669"/>
    <property type="project" value="TreeGrafter"/>
</dbReference>
<dbReference type="GO" id="GO:0008837">
    <property type="term" value="F:diaminopimelate epimerase activity"/>
    <property type="evidence" value="ECO:0007669"/>
    <property type="project" value="UniProtKB-UniRule"/>
</dbReference>
<dbReference type="GO" id="GO:0009089">
    <property type="term" value="P:lysine biosynthetic process via diaminopimelate"/>
    <property type="evidence" value="ECO:0007669"/>
    <property type="project" value="UniProtKB-UniRule"/>
</dbReference>
<dbReference type="FunFam" id="3.10.310.10:FF:000004">
    <property type="entry name" value="Diaminopimelate epimerase"/>
    <property type="match status" value="1"/>
</dbReference>
<dbReference type="Gene3D" id="3.10.310.10">
    <property type="entry name" value="Diaminopimelate Epimerase, Chain A, domain 1"/>
    <property type="match status" value="2"/>
</dbReference>
<dbReference type="HAMAP" id="MF_00197">
    <property type="entry name" value="DAP_epimerase"/>
    <property type="match status" value="1"/>
</dbReference>
<dbReference type="InterPro" id="IPR018510">
    <property type="entry name" value="DAP_epimerase_AS"/>
</dbReference>
<dbReference type="InterPro" id="IPR001653">
    <property type="entry name" value="DAP_epimerase_DapF"/>
</dbReference>
<dbReference type="NCBIfam" id="TIGR00652">
    <property type="entry name" value="DapF"/>
    <property type="match status" value="1"/>
</dbReference>
<dbReference type="PANTHER" id="PTHR31689:SF0">
    <property type="entry name" value="DIAMINOPIMELATE EPIMERASE"/>
    <property type="match status" value="1"/>
</dbReference>
<dbReference type="PANTHER" id="PTHR31689">
    <property type="entry name" value="DIAMINOPIMELATE EPIMERASE, CHLOROPLASTIC"/>
    <property type="match status" value="1"/>
</dbReference>
<dbReference type="Pfam" id="PF01678">
    <property type="entry name" value="DAP_epimerase"/>
    <property type="match status" value="2"/>
</dbReference>
<dbReference type="SUPFAM" id="SSF54506">
    <property type="entry name" value="Diaminopimelate epimerase-like"/>
    <property type="match status" value="1"/>
</dbReference>
<dbReference type="PROSITE" id="PS01326">
    <property type="entry name" value="DAP_EPIMERASE"/>
    <property type="match status" value="1"/>
</dbReference>
<reference key="1">
    <citation type="journal article" date="2002" name="Nucleic Acids Res.">
        <title>Genome sequence of Oceanobacillus iheyensis isolated from the Iheya Ridge and its unexpected adaptive capabilities to extreme environments.</title>
        <authorList>
            <person name="Takami H."/>
            <person name="Takaki Y."/>
            <person name="Uchiyama I."/>
        </authorList>
    </citation>
    <scope>NUCLEOTIDE SEQUENCE [LARGE SCALE GENOMIC DNA]</scope>
    <source>
        <strain>DSM 14371 / CIP 107618 / JCM 11309 / KCTC 3954 / HTE831</strain>
    </source>
</reference>
<proteinExistence type="inferred from homology"/>
<keyword id="KW-0028">Amino-acid biosynthesis</keyword>
<keyword id="KW-0963">Cytoplasm</keyword>
<keyword id="KW-0413">Isomerase</keyword>
<keyword id="KW-0457">Lysine biosynthesis</keyword>
<keyword id="KW-1185">Reference proteome</keyword>
<comment type="function">
    <text evidence="1">Catalyzes the stereoinversion of LL-2,6-diaminopimelate (L,L-DAP) to meso-diaminopimelate (meso-DAP), a precursor of L-lysine and an essential component of the bacterial peptidoglycan.</text>
</comment>
<comment type="catalytic activity">
    <reaction evidence="1">
        <text>(2S,6S)-2,6-diaminopimelate = meso-2,6-diaminopimelate</text>
        <dbReference type="Rhea" id="RHEA:15393"/>
        <dbReference type="ChEBI" id="CHEBI:57609"/>
        <dbReference type="ChEBI" id="CHEBI:57791"/>
        <dbReference type="EC" id="5.1.1.7"/>
    </reaction>
</comment>
<comment type="pathway">
    <text evidence="1">Amino-acid biosynthesis; L-lysine biosynthesis via DAP pathway; DL-2,6-diaminopimelate from LL-2,6-diaminopimelate: step 1/1.</text>
</comment>
<comment type="subunit">
    <text evidence="1">Homodimer.</text>
</comment>
<comment type="subcellular location">
    <subcellularLocation>
        <location evidence="1">Cytoplasm</location>
    </subcellularLocation>
</comment>
<comment type="similarity">
    <text evidence="1">Belongs to the diaminopimelate epimerase family.</text>
</comment>
<organism>
    <name type="scientific">Oceanobacillus iheyensis (strain DSM 14371 / CIP 107618 / JCM 11309 / KCTC 3954 / HTE831)</name>
    <dbReference type="NCBI Taxonomy" id="221109"/>
    <lineage>
        <taxon>Bacteria</taxon>
        <taxon>Bacillati</taxon>
        <taxon>Bacillota</taxon>
        <taxon>Bacilli</taxon>
        <taxon>Bacillales</taxon>
        <taxon>Bacillaceae</taxon>
        <taxon>Oceanobacillus</taxon>
    </lineage>
</organism>